<dbReference type="EC" id="2.3.1.191" evidence="1"/>
<dbReference type="EMBL" id="AL111168">
    <property type="protein sequence ID" value="CAL34722.1"/>
    <property type="molecule type" value="Genomic_DNA"/>
</dbReference>
<dbReference type="PIR" id="G81404">
    <property type="entry name" value="G81404"/>
</dbReference>
<dbReference type="RefSeq" id="WP_002852180.1">
    <property type="nucleotide sequence ID" value="NZ_SZUC01000002.1"/>
</dbReference>
<dbReference type="RefSeq" id="YP_002344006.1">
    <property type="nucleotide sequence ID" value="NC_002163.1"/>
</dbReference>
<dbReference type="SMR" id="Q9PHU0"/>
<dbReference type="IntAct" id="Q9PHU0">
    <property type="interactions" value="38"/>
</dbReference>
<dbReference type="STRING" id="192222.Cj0576"/>
<dbReference type="PaxDb" id="192222-Cj0576"/>
<dbReference type="EnsemblBacteria" id="CAL34722">
    <property type="protein sequence ID" value="CAL34722"/>
    <property type="gene ID" value="Cj0576"/>
</dbReference>
<dbReference type="GeneID" id="904901"/>
<dbReference type="KEGG" id="cje:Cj0576"/>
<dbReference type="PATRIC" id="fig|192222.6.peg.568"/>
<dbReference type="eggNOG" id="COG1044">
    <property type="taxonomic scope" value="Bacteria"/>
</dbReference>
<dbReference type="HOGENOM" id="CLU_049865_0_0_7"/>
<dbReference type="OrthoDB" id="9784739at2"/>
<dbReference type="UniPathway" id="UPA00973"/>
<dbReference type="Proteomes" id="UP000000799">
    <property type="component" value="Chromosome"/>
</dbReference>
<dbReference type="GO" id="GO:0016020">
    <property type="term" value="C:membrane"/>
    <property type="evidence" value="ECO:0007669"/>
    <property type="project" value="GOC"/>
</dbReference>
<dbReference type="GO" id="GO:0016410">
    <property type="term" value="F:N-acyltransferase activity"/>
    <property type="evidence" value="ECO:0007669"/>
    <property type="project" value="InterPro"/>
</dbReference>
<dbReference type="GO" id="GO:0009245">
    <property type="term" value="P:lipid A biosynthetic process"/>
    <property type="evidence" value="ECO:0007669"/>
    <property type="project" value="UniProtKB-UniRule"/>
</dbReference>
<dbReference type="CDD" id="cd03352">
    <property type="entry name" value="LbH_LpxD"/>
    <property type="match status" value="1"/>
</dbReference>
<dbReference type="Gene3D" id="2.160.10.10">
    <property type="entry name" value="Hexapeptide repeat proteins"/>
    <property type="match status" value="1"/>
</dbReference>
<dbReference type="Gene3D" id="3.40.1390.10">
    <property type="entry name" value="MurE/MurF, N-terminal domain"/>
    <property type="match status" value="1"/>
</dbReference>
<dbReference type="HAMAP" id="MF_00523">
    <property type="entry name" value="LpxD"/>
    <property type="match status" value="1"/>
</dbReference>
<dbReference type="InterPro" id="IPR001451">
    <property type="entry name" value="Hexapep"/>
</dbReference>
<dbReference type="InterPro" id="IPR018357">
    <property type="entry name" value="Hexapep_transf_CS"/>
</dbReference>
<dbReference type="InterPro" id="IPR007691">
    <property type="entry name" value="LpxD"/>
</dbReference>
<dbReference type="InterPro" id="IPR011004">
    <property type="entry name" value="Trimer_LpxA-like_sf"/>
</dbReference>
<dbReference type="InterPro" id="IPR020573">
    <property type="entry name" value="UDP_GlcNAc_AcTrfase_non-rep"/>
</dbReference>
<dbReference type="NCBIfam" id="TIGR01853">
    <property type="entry name" value="lipid_A_lpxD"/>
    <property type="match status" value="1"/>
</dbReference>
<dbReference type="NCBIfam" id="NF002060">
    <property type="entry name" value="PRK00892.1"/>
    <property type="match status" value="1"/>
</dbReference>
<dbReference type="PANTHER" id="PTHR43378">
    <property type="entry name" value="UDP-3-O-ACYLGLUCOSAMINE N-ACYLTRANSFERASE"/>
    <property type="match status" value="1"/>
</dbReference>
<dbReference type="PANTHER" id="PTHR43378:SF2">
    <property type="entry name" value="UDP-3-O-ACYLGLUCOSAMINE N-ACYLTRANSFERASE 1, MITOCHONDRIAL-RELATED"/>
    <property type="match status" value="1"/>
</dbReference>
<dbReference type="Pfam" id="PF00132">
    <property type="entry name" value="Hexapep"/>
    <property type="match status" value="1"/>
</dbReference>
<dbReference type="Pfam" id="PF14602">
    <property type="entry name" value="Hexapep_2"/>
    <property type="match status" value="1"/>
</dbReference>
<dbReference type="Pfam" id="PF04613">
    <property type="entry name" value="LpxD"/>
    <property type="match status" value="1"/>
</dbReference>
<dbReference type="SUPFAM" id="SSF51161">
    <property type="entry name" value="Trimeric LpxA-like enzymes"/>
    <property type="match status" value="1"/>
</dbReference>
<dbReference type="PROSITE" id="PS00101">
    <property type="entry name" value="HEXAPEP_TRANSFERASES"/>
    <property type="match status" value="1"/>
</dbReference>
<reference key="1">
    <citation type="journal article" date="2000" name="Nature">
        <title>The genome sequence of the food-borne pathogen Campylobacter jejuni reveals hypervariable sequences.</title>
        <authorList>
            <person name="Parkhill J."/>
            <person name="Wren B.W."/>
            <person name="Mungall K.L."/>
            <person name="Ketley J.M."/>
            <person name="Churcher C.M."/>
            <person name="Basham D."/>
            <person name="Chillingworth T."/>
            <person name="Davies R.M."/>
            <person name="Feltwell T."/>
            <person name="Holroyd S."/>
            <person name="Jagels K."/>
            <person name="Karlyshev A.V."/>
            <person name="Moule S."/>
            <person name="Pallen M.J."/>
            <person name="Penn C.W."/>
            <person name="Quail M.A."/>
            <person name="Rajandream M.A."/>
            <person name="Rutherford K.M."/>
            <person name="van Vliet A.H.M."/>
            <person name="Whitehead S."/>
            <person name="Barrell B.G."/>
        </authorList>
    </citation>
    <scope>NUCLEOTIDE SEQUENCE [LARGE SCALE GENOMIC DNA]</scope>
    <source>
        <strain>ATCC 700819 / NCTC 11168</strain>
    </source>
</reference>
<evidence type="ECO:0000255" key="1">
    <source>
        <dbReference type="HAMAP-Rule" id="MF_00523"/>
    </source>
</evidence>
<sequence>MKLSEIAEFLSLEYKGEDIEISALNSLLKANFTELTYCDGEKNTKDIPHTGAAAILVSKEYENLVPKDTKALITQSPHLSFAFLSKLFAKPLISTAKEKVQNIAKSARIMPNVYIGDNVNIGENVIIMAGAYIGDNVSIGDESIIHPNVVIYNDTKIGKKCHLLANCVIGSDGFGYAHNKNGEHYKIYHNGNVVLEDFVEVGACTTIDRAVFDSTIIKAGTKVDNLVQIGHNCNIGQNCIIVAQTGISGSSELGRNVIMGGQSATSGHLKIGDFSTIAARGGVSKNLEGGRVYGGFPIMLQKDWLKLQAKIAINFKEKSQD</sequence>
<comment type="function">
    <text evidence="1">Catalyzes the N-acylation of UDP-3-O-acylglucosamine using 3-hydroxyacyl-ACP as the acyl donor. Is involved in the biosynthesis of lipid A, a phosphorylated glycolipid that anchors the lipopolysaccharide to the outer membrane of the cell.</text>
</comment>
<comment type="catalytic activity">
    <reaction evidence="1">
        <text>a UDP-3-O-[(3R)-3-hydroxyacyl]-alpha-D-glucosamine + a (3R)-hydroxyacyl-[ACP] = a UDP-2-N,3-O-bis[(3R)-3-hydroxyacyl]-alpha-D-glucosamine + holo-[ACP] + H(+)</text>
        <dbReference type="Rhea" id="RHEA:53836"/>
        <dbReference type="Rhea" id="RHEA-COMP:9685"/>
        <dbReference type="Rhea" id="RHEA-COMP:9945"/>
        <dbReference type="ChEBI" id="CHEBI:15378"/>
        <dbReference type="ChEBI" id="CHEBI:64479"/>
        <dbReference type="ChEBI" id="CHEBI:78827"/>
        <dbReference type="ChEBI" id="CHEBI:137740"/>
        <dbReference type="ChEBI" id="CHEBI:137748"/>
        <dbReference type="EC" id="2.3.1.191"/>
    </reaction>
</comment>
<comment type="pathway">
    <text evidence="1">Bacterial outer membrane biogenesis; LPS lipid A biosynthesis.</text>
</comment>
<comment type="subunit">
    <text evidence="1">Homotrimer.</text>
</comment>
<comment type="similarity">
    <text evidence="1">Belongs to the transferase hexapeptide repeat family. LpxD subfamily.</text>
</comment>
<organism>
    <name type="scientific">Campylobacter jejuni subsp. jejuni serotype O:2 (strain ATCC 700819 / NCTC 11168)</name>
    <dbReference type="NCBI Taxonomy" id="192222"/>
    <lineage>
        <taxon>Bacteria</taxon>
        <taxon>Pseudomonadati</taxon>
        <taxon>Campylobacterota</taxon>
        <taxon>Epsilonproteobacteria</taxon>
        <taxon>Campylobacterales</taxon>
        <taxon>Campylobacteraceae</taxon>
        <taxon>Campylobacter</taxon>
    </lineage>
</organism>
<name>LPXD_CAMJE</name>
<protein>
    <recommendedName>
        <fullName evidence="1">UDP-3-O-acylglucosamine N-acyltransferase</fullName>
        <ecNumber evidence="1">2.3.1.191</ecNumber>
    </recommendedName>
</protein>
<keyword id="KW-0012">Acyltransferase</keyword>
<keyword id="KW-0441">Lipid A biosynthesis</keyword>
<keyword id="KW-0444">Lipid biosynthesis</keyword>
<keyword id="KW-0443">Lipid metabolism</keyword>
<keyword id="KW-1185">Reference proteome</keyword>
<keyword id="KW-0677">Repeat</keyword>
<keyword id="KW-0808">Transferase</keyword>
<proteinExistence type="inferred from homology"/>
<gene>
    <name evidence="1" type="primary">lpxD</name>
    <name type="ordered locus">Cj0576</name>
</gene>
<accession>Q9PHU0</accession>
<accession>Q0PAU1</accession>
<feature type="chain" id="PRO_0000059658" description="UDP-3-O-acylglucosamine N-acyltransferase">
    <location>
        <begin position="1"/>
        <end position="321"/>
    </location>
</feature>
<feature type="active site" description="Proton acceptor" evidence="1">
    <location>
        <position position="231"/>
    </location>
</feature>